<name>TM104_CAEBR</name>
<feature type="chain" id="PRO_0000254183" description="Transmembrane protein 104 homolog">
    <location>
        <begin position="1"/>
        <end position="492"/>
    </location>
</feature>
<feature type="topological domain" description="Cytoplasmic" evidence="1">
    <location>
        <begin position="1"/>
        <end position="18"/>
    </location>
</feature>
<feature type="transmembrane region" description="Helical" evidence="1">
    <location>
        <begin position="19"/>
        <end position="39"/>
    </location>
</feature>
<feature type="topological domain" description="Extracellular" evidence="1">
    <location>
        <begin position="40"/>
        <end position="45"/>
    </location>
</feature>
<feature type="transmembrane region" description="Helical" evidence="1">
    <location>
        <begin position="46"/>
        <end position="66"/>
    </location>
</feature>
<feature type="topological domain" description="Cytoplasmic" evidence="1">
    <location>
        <begin position="67"/>
        <end position="114"/>
    </location>
</feature>
<feature type="transmembrane region" description="Helical" evidence="1">
    <location>
        <begin position="115"/>
        <end position="135"/>
    </location>
</feature>
<feature type="topological domain" description="Extracellular" evidence="1">
    <location>
        <begin position="136"/>
        <end position="177"/>
    </location>
</feature>
<feature type="transmembrane region" description="Helical" evidence="1">
    <location>
        <begin position="178"/>
        <end position="198"/>
    </location>
</feature>
<feature type="topological domain" description="Cytoplasmic" evidence="1">
    <location>
        <begin position="199"/>
        <end position="210"/>
    </location>
</feature>
<feature type="transmembrane region" description="Helical" evidence="1">
    <location>
        <begin position="211"/>
        <end position="231"/>
    </location>
</feature>
<feature type="topological domain" description="Extracellular" evidence="1">
    <location>
        <begin position="232"/>
        <end position="238"/>
    </location>
</feature>
<feature type="transmembrane region" description="Helical" evidence="1">
    <location>
        <begin position="239"/>
        <end position="259"/>
    </location>
</feature>
<feature type="topological domain" description="Cytoplasmic" evidence="1">
    <location>
        <begin position="260"/>
        <end position="275"/>
    </location>
</feature>
<feature type="transmembrane region" description="Helical" evidence="1">
    <location>
        <begin position="276"/>
        <end position="296"/>
    </location>
</feature>
<feature type="topological domain" description="Extracellular" evidence="1">
    <location>
        <begin position="297"/>
        <end position="325"/>
    </location>
</feature>
<feature type="transmembrane region" description="Helical" evidence="1">
    <location>
        <begin position="326"/>
        <end position="346"/>
    </location>
</feature>
<feature type="topological domain" description="Cytoplasmic" evidence="1">
    <location>
        <begin position="347"/>
        <end position="391"/>
    </location>
</feature>
<feature type="transmembrane region" description="Helical" evidence="1">
    <location>
        <begin position="392"/>
        <end position="412"/>
    </location>
</feature>
<feature type="topological domain" description="Extracellular" evidence="1">
    <location>
        <begin position="413"/>
        <end position="415"/>
    </location>
</feature>
<feature type="transmembrane region" description="Helical" evidence="1">
    <location>
        <begin position="416"/>
        <end position="436"/>
    </location>
</feature>
<feature type="topological domain" description="Cytoplasmic" evidence="1">
    <location>
        <begin position="437"/>
        <end position="466"/>
    </location>
</feature>
<feature type="transmembrane region" description="Helical" evidence="1">
    <location>
        <begin position="467"/>
        <end position="487"/>
    </location>
</feature>
<feature type="topological domain" description="Extracellular" evidence="1">
    <location>
        <begin position="488"/>
        <end position="492"/>
    </location>
</feature>
<feature type="region of interest" description="Disordered" evidence="2">
    <location>
        <begin position="367"/>
        <end position="387"/>
    </location>
</feature>
<feature type="compositionally biased region" description="Acidic residues" evidence="2">
    <location>
        <begin position="367"/>
        <end position="382"/>
    </location>
</feature>
<feature type="glycosylation site" description="N-linked (GlcNAc...) asparagine" evidence="1">
    <location>
        <position position="152"/>
    </location>
</feature>
<feature type="glycosylation site" description="N-linked (GlcNAc...) asparagine" evidence="1">
    <location>
        <position position="314"/>
    </location>
</feature>
<accession>Q610N4</accession>
<accession>A8XQY5</accession>
<evidence type="ECO:0000255" key="1"/>
<evidence type="ECO:0000256" key="2">
    <source>
        <dbReference type="SAM" id="MobiDB-lite"/>
    </source>
</evidence>
<evidence type="ECO:0000305" key="3"/>
<comment type="subcellular location">
    <subcellularLocation>
        <location evidence="3">Membrane</location>
        <topology evidence="3">Multi-pass membrane protein</topology>
    </subcellularLocation>
</comment>
<comment type="similarity">
    <text evidence="3">Belongs to the TMEM104 family.</text>
</comment>
<protein>
    <recommendedName>
        <fullName>Transmembrane protein 104 homolog</fullName>
    </recommendedName>
</protein>
<gene>
    <name type="ORF">CBG17386</name>
</gene>
<organism>
    <name type="scientific">Caenorhabditis briggsae</name>
    <dbReference type="NCBI Taxonomy" id="6238"/>
    <lineage>
        <taxon>Eukaryota</taxon>
        <taxon>Metazoa</taxon>
        <taxon>Ecdysozoa</taxon>
        <taxon>Nematoda</taxon>
        <taxon>Chromadorea</taxon>
        <taxon>Rhabditida</taxon>
        <taxon>Rhabditina</taxon>
        <taxon>Rhabditomorpha</taxon>
        <taxon>Rhabditoidea</taxon>
        <taxon>Rhabditidae</taxon>
        <taxon>Peloderinae</taxon>
        <taxon>Caenorhabditis</taxon>
    </lineage>
</organism>
<dbReference type="EMBL" id="HE600924">
    <property type="protein sequence ID" value="CAP35060.2"/>
    <property type="molecule type" value="Genomic_DNA"/>
</dbReference>
<dbReference type="RefSeq" id="XP_045096188.1">
    <property type="nucleotide sequence ID" value="XM_045239159.1"/>
</dbReference>
<dbReference type="FunCoup" id="Q610N4">
    <property type="interactions" value="2036"/>
</dbReference>
<dbReference type="GeneID" id="8585995"/>
<dbReference type="WormBase" id="CBG17386">
    <property type="protein sequence ID" value="CBP41580"/>
    <property type="gene ID" value="WBGene00037029"/>
</dbReference>
<dbReference type="eggNOG" id="KOG3832">
    <property type="taxonomic scope" value="Eukaryota"/>
</dbReference>
<dbReference type="HOGENOM" id="CLU_025541_1_0_1"/>
<dbReference type="InParanoid" id="Q610N4"/>
<dbReference type="OMA" id="GHREGHP"/>
<dbReference type="Proteomes" id="UP000008549">
    <property type="component" value="Unassembled WGS sequence"/>
</dbReference>
<dbReference type="GO" id="GO:0016020">
    <property type="term" value="C:membrane"/>
    <property type="evidence" value="ECO:0007669"/>
    <property type="project" value="UniProtKB-SubCell"/>
</dbReference>
<dbReference type="InterPro" id="IPR013057">
    <property type="entry name" value="AA_transpt_TM"/>
</dbReference>
<dbReference type="PANTHER" id="PTHR16189:SF0">
    <property type="entry name" value="TRANSMEMBRANE PROTEIN 104"/>
    <property type="match status" value="1"/>
</dbReference>
<dbReference type="PANTHER" id="PTHR16189">
    <property type="entry name" value="TRANSMEMBRANE PROTEIN 104-RELATED"/>
    <property type="match status" value="1"/>
</dbReference>
<dbReference type="Pfam" id="PF01490">
    <property type="entry name" value="Aa_trans"/>
    <property type="match status" value="1"/>
</dbReference>
<reference key="1">
    <citation type="journal article" date="2003" name="PLoS Biol.">
        <title>The genome sequence of Caenorhabditis briggsae: a platform for comparative genomics.</title>
        <authorList>
            <person name="Stein L.D."/>
            <person name="Bao Z."/>
            <person name="Blasiar D."/>
            <person name="Blumenthal T."/>
            <person name="Brent M.R."/>
            <person name="Chen N."/>
            <person name="Chinwalla A."/>
            <person name="Clarke L."/>
            <person name="Clee C."/>
            <person name="Coghlan A."/>
            <person name="Coulson A."/>
            <person name="D'Eustachio P."/>
            <person name="Fitch D.H.A."/>
            <person name="Fulton L.A."/>
            <person name="Fulton R.E."/>
            <person name="Griffiths-Jones S."/>
            <person name="Harris T.W."/>
            <person name="Hillier L.W."/>
            <person name="Kamath R."/>
            <person name="Kuwabara P.E."/>
            <person name="Mardis E.R."/>
            <person name="Marra M.A."/>
            <person name="Miner T.L."/>
            <person name="Minx P."/>
            <person name="Mullikin J.C."/>
            <person name="Plumb R.W."/>
            <person name="Rogers J."/>
            <person name="Schein J.E."/>
            <person name="Sohrmann M."/>
            <person name="Spieth J."/>
            <person name="Stajich J.E."/>
            <person name="Wei C."/>
            <person name="Willey D."/>
            <person name="Wilson R.K."/>
            <person name="Durbin R.M."/>
            <person name="Waterston R.H."/>
        </authorList>
    </citation>
    <scope>NUCLEOTIDE SEQUENCE [LARGE SCALE GENOMIC DNA]</scope>
    <source>
        <strain>AF16</strain>
    </source>
</reference>
<proteinExistence type="inferred from homology"/>
<sequence length="492" mass="54104">MQSNTDSSGTSGTYSQTVGLLYVFNLIVGTGALALPKAFQSAGWLLSISLLTFSAFMSYVAATFVIEALSVANAVLSKKRRVEYDDVVVADGPSTFEIAKKVEVSEMASMFLSKVSLVFSYFAIIIYLFGDLAIYSTTVPKSAMNIVCSTINATIVKSSDPCHESWPEILTRMTVYRFFVIVFVVVVCLPMVIAGITKTRHIQIMTTLSRWAAFILMISLATMQLSSQGAAAHPPAYNFHGFGSLFGCAVYAFMCHHSIPSLITPMRTKENVFGKIAVVYGIVGVFYFTLSLTGAFAFEHVQDIYTLNFLHDDNTSLVYSIIDYFLALFPIITLTSSYPIIALTLINNFKVVKDILCPKTGQENESLLEADNQVEDNDTDDEREARNGNPKTIFDVLVPTLVLALPTFLSLLTDDMLLLASITGSFPGVAVQFAIPCLLVTAARKHARSVLNFPVPRKNNSPFQSRFWIMLISSWAGFSMIMVLLNLVGVKF</sequence>
<keyword id="KW-0325">Glycoprotein</keyword>
<keyword id="KW-0472">Membrane</keyword>
<keyword id="KW-1185">Reference proteome</keyword>
<keyword id="KW-0812">Transmembrane</keyword>
<keyword id="KW-1133">Transmembrane helix</keyword>